<keyword id="KW-0349">Heme</keyword>
<keyword id="KW-0408">Iron</keyword>
<keyword id="KW-0479">Metal-binding</keyword>
<keyword id="KW-0503">Monooxygenase</keyword>
<keyword id="KW-0560">Oxidoreductase</keyword>
<keyword id="KW-1185">Reference proteome</keyword>
<sequence length="520" mass="59371">MSLSLLIAGALFIGFLTYYIWIWSFWIRKGVKGPRGFPFFGVILKFHDYENPGLLKLGEWTKKYGSIYGITEGVEKTLVVSNPEFVHEVFVKQFDNFYGRKTNPIQGDPNKNKRAHLVLAQGHRWKRLRTLASPTFSNKSLRKIMSTVEETVVELMRHLDEASAKGKAVDLLDYYQEFTLDIIGRIAMGQTESLMFRNPMLPKVKEIFKKGGKMPFLIAGVFPIAGTLMRQLFMKFPKFSPAFGIMNTMEKALNKRLEQRAADKKAGIEPSGEPQDFIDLFLDARANVDFIEEESTLGFAKSEVLKVDKHLTFDEIIGQLFVFLLAGYDTTALSLSYSSYLLATHPEIQKKLQEEVDRECPDPEVTFDQISKLKYMECVVKEALRMYPLASLVHNRKCMKKTNVLGVEIDEGTNVQVDTWTLHYDPKVWGDDASEFKPERWETGDELFYAKGGYLPFGMGPRICIGMRLAMMEEKLLLTHILKKYTFDTSTETEIPLKLVGSATIAPRNVMLKLTPRHSN</sequence>
<organism>
    <name type="scientific">Caenorhabditis elegans</name>
    <dbReference type="NCBI Taxonomy" id="6239"/>
    <lineage>
        <taxon>Eukaryota</taxon>
        <taxon>Metazoa</taxon>
        <taxon>Ecdysozoa</taxon>
        <taxon>Nematoda</taxon>
        <taxon>Chromadorea</taxon>
        <taxon>Rhabditida</taxon>
        <taxon>Rhabditina</taxon>
        <taxon>Rhabditomorpha</taxon>
        <taxon>Rhabditoidea</taxon>
        <taxon>Rhabditidae</taxon>
        <taxon>Peloderinae</taxon>
        <taxon>Caenorhabditis</taxon>
    </lineage>
</organism>
<protein>
    <recommendedName>
        <fullName>Putative cytochrome P450 CYP13A4</fullName>
        <ecNumber>1.14.-.-</ecNumber>
    </recommendedName>
</protein>
<dbReference type="EC" id="1.14.-.-"/>
<dbReference type="EMBL" id="Z48717">
    <property type="protein sequence ID" value="CAA88603.1"/>
    <property type="molecule type" value="Genomic_DNA"/>
</dbReference>
<dbReference type="PIR" id="T24777">
    <property type="entry name" value="T24777"/>
</dbReference>
<dbReference type="RefSeq" id="NP_496111.1">
    <property type="nucleotide sequence ID" value="NM_063710.3"/>
</dbReference>
<dbReference type="SMR" id="Q27513"/>
<dbReference type="FunCoup" id="Q27513">
    <property type="interactions" value="127"/>
</dbReference>
<dbReference type="STRING" id="6239.T10B9.1.1"/>
<dbReference type="PaxDb" id="6239-T10B9.1"/>
<dbReference type="PeptideAtlas" id="Q27513"/>
<dbReference type="EnsemblMetazoa" id="T10B9.1.1">
    <property type="protein sequence ID" value="T10B9.1.1"/>
    <property type="gene ID" value="WBGene00011671"/>
</dbReference>
<dbReference type="GeneID" id="188355"/>
<dbReference type="KEGG" id="cel:CELE_T10B9.1"/>
<dbReference type="UCSC" id="T10B9.1">
    <property type="organism name" value="c. elegans"/>
</dbReference>
<dbReference type="AGR" id="WB:WBGene00011671"/>
<dbReference type="CTD" id="188355"/>
<dbReference type="WormBase" id="T10B9.1">
    <property type="protein sequence ID" value="CE01654"/>
    <property type="gene ID" value="WBGene00011671"/>
    <property type="gene designation" value="cyp-13A4"/>
</dbReference>
<dbReference type="eggNOG" id="KOG0158">
    <property type="taxonomic scope" value="Eukaryota"/>
</dbReference>
<dbReference type="GeneTree" id="ENSGT00970000195979"/>
<dbReference type="HOGENOM" id="CLU_001570_5_2_1"/>
<dbReference type="InParanoid" id="Q27513"/>
<dbReference type="OMA" id="LAPECEN"/>
<dbReference type="OrthoDB" id="2789670at2759"/>
<dbReference type="PhylomeDB" id="Q27513"/>
<dbReference type="PRO" id="PR:Q27513"/>
<dbReference type="Proteomes" id="UP000001940">
    <property type="component" value="Chromosome II"/>
</dbReference>
<dbReference type="Bgee" id="WBGene00011671">
    <property type="expression patterns" value="Expressed in adult organism"/>
</dbReference>
<dbReference type="GO" id="GO:0020037">
    <property type="term" value="F:heme binding"/>
    <property type="evidence" value="ECO:0007669"/>
    <property type="project" value="InterPro"/>
</dbReference>
<dbReference type="GO" id="GO:0005506">
    <property type="term" value="F:iron ion binding"/>
    <property type="evidence" value="ECO:0007669"/>
    <property type="project" value="InterPro"/>
</dbReference>
<dbReference type="GO" id="GO:0004497">
    <property type="term" value="F:monooxygenase activity"/>
    <property type="evidence" value="ECO:0007669"/>
    <property type="project" value="UniProtKB-KW"/>
</dbReference>
<dbReference type="GO" id="GO:0016705">
    <property type="term" value="F:oxidoreductase activity, acting on paired donors, with incorporation or reduction of molecular oxygen"/>
    <property type="evidence" value="ECO:0007669"/>
    <property type="project" value="InterPro"/>
</dbReference>
<dbReference type="CDD" id="cd11055">
    <property type="entry name" value="CYP3A-like"/>
    <property type="match status" value="1"/>
</dbReference>
<dbReference type="FunFam" id="1.10.630.10:FF:000182">
    <property type="entry name" value="Cytochrome P450 3A4"/>
    <property type="match status" value="1"/>
</dbReference>
<dbReference type="Gene3D" id="1.10.630.10">
    <property type="entry name" value="Cytochrome P450"/>
    <property type="match status" value="1"/>
</dbReference>
<dbReference type="InterPro" id="IPR001128">
    <property type="entry name" value="Cyt_P450"/>
</dbReference>
<dbReference type="InterPro" id="IPR017972">
    <property type="entry name" value="Cyt_P450_CS"/>
</dbReference>
<dbReference type="InterPro" id="IPR002401">
    <property type="entry name" value="Cyt_P450_E_grp-I"/>
</dbReference>
<dbReference type="InterPro" id="IPR036396">
    <property type="entry name" value="Cyt_P450_sf"/>
</dbReference>
<dbReference type="InterPro" id="IPR050705">
    <property type="entry name" value="Cytochrome_P450_3A"/>
</dbReference>
<dbReference type="PANTHER" id="PTHR24302">
    <property type="entry name" value="CYTOCHROME P450 FAMILY 3"/>
    <property type="match status" value="1"/>
</dbReference>
<dbReference type="PANTHER" id="PTHR24302:SF15">
    <property type="entry name" value="FATTY-ACID PEROXYGENASE"/>
    <property type="match status" value="1"/>
</dbReference>
<dbReference type="Pfam" id="PF00067">
    <property type="entry name" value="p450"/>
    <property type="match status" value="1"/>
</dbReference>
<dbReference type="PRINTS" id="PR00463">
    <property type="entry name" value="EP450I"/>
</dbReference>
<dbReference type="PRINTS" id="PR00385">
    <property type="entry name" value="P450"/>
</dbReference>
<dbReference type="SUPFAM" id="SSF48264">
    <property type="entry name" value="Cytochrome P450"/>
    <property type="match status" value="1"/>
</dbReference>
<dbReference type="PROSITE" id="PS00086">
    <property type="entry name" value="CYTOCHROME_P450"/>
    <property type="match status" value="1"/>
</dbReference>
<proteinExistence type="inferred from homology"/>
<gene>
    <name type="primary">cyp-13A4</name>
    <name type="synonym">cyp13a4</name>
    <name type="ORF">T10B9.1</name>
</gene>
<evidence type="ECO:0000250" key="1"/>
<evidence type="ECO:0000305" key="2"/>
<reference key="1">
    <citation type="journal article" date="1998" name="Science">
        <title>Genome sequence of the nematode C. elegans: a platform for investigating biology.</title>
        <authorList>
            <consortium name="The C. elegans sequencing consortium"/>
        </authorList>
    </citation>
    <scope>NUCLEOTIDE SEQUENCE [LARGE SCALE GENOMIC DNA]</scope>
    <source>
        <strain>Bristol N2</strain>
    </source>
</reference>
<comment type="function">
    <text>Cytochromes P450 are a group of heme-thiolate monooxygenases. They oxidize a variety of structurally unrelated compounds, including steroids, fatty acids, and xenobiotics.</text>
</comment>
<comment type="cofactor">
    <cofactor evidence="1">
        <name>heme</name>
        <dbReference type="ChEBI" id="CHEBI:30413"/>
    </cofactor>
</comment>
<comment type="similarity">
    <text evidence="2">Belongs to the cytochrome P450 family.</text>
</comment>
<accession>Q27513</accession>
<feature type="chain" id="PRO_0000052264" description="Putative cytochrome P450 CYP13A4">
    <location>
        <begin position="1"/>
        <end position="520"/>
    </location>
</feature>
<feature type="binding site" description="axial binding residue" evidence="1">
    <location>
        <position position="464"/>
    </location>
    <ligand>
        <name>heme</name>
        <dbReference type="ChEBI" id="CHEBI:30413"/>
    </ligand>
    <ligandPart>
        <name>Fe</name>
        <dbReference type="ChEBI" id="CHEBI:18248"/>
    </ligandPart>
</feature>
<name>C13A4_CAEEL</name>